<comment type="function">
    <text evidence="1">Acts as a mediator between the cap-binding complex (CBC) and RNA-mediated gene silencing (RNAi). Involved in innate immunity via the short interfering RNAs (siRNAs) processing machinery by restricting the viral RNA production. Also involved microRNA (miRNA)-mediated silencing by contributing to the stability and delivery of primary miRNA transcripts to the primary miRNA processing complex containing drosha and pasha (By similarity).</text>
</comment>
<comment type="subunit">
    <text evidence="1">Interacts with cbp20, Dcr-2 and pasha.</text>
</comment>
<comment type="subcellular location">
    <subcellularLocation>
        <location evidence="1">Nucleus</location>
    </subcellularLocation>
</comment>
<comment type="similarity">
    <text evidence="3">Belongs to the ARS2 family.</text>
</comment>
<reference key="1">
    <citation type="journal article" date="2007" name="Nature">
        <title>Evolution of genes and genomes on the Drosophila phylogeny.</title>
        <authorList>
            <consortium name="Drosophila 12 genomes consortium"/>
        </authorList>
    </citation>
    <scope>NUCLEOTIDE SEQUENCE [LARGE SCALE GENOMIC DNA]</scope>
    <source>
        <strain>Tucson 15081-1352.22</strain>
    </source>
</reference>
<gene>
    <name type="primary">Ars2</name>
    <name type="ORF">GI21286</name>
</gene>
<organism>
    <name type="scientific">Drosophila mojavensis</name>
    <name type="common">Fruit fly</name>
    <dbReference type="NCBI Taxonomy" id="7230"/>
    <lineage>
        <taxon>Eukaryota</taxon>
        <taxon>Metazoa</taxon>
        <taxon>Ecdysozoa</taxon>
        <taxon>Arthropoda</taxon>
        <taxon>Hexapoda</taxon>
        <taxon>Insecta</taxon>
        <taxon>Pterygota</taxon>
        <taxon>Neoptera</taxon>
        <taxon>Endopterygota</taxon>
        <taxon>Diptera</taxon>
        <taxon>Brachycera</taxon>
        <taxon>Muscomorpha</taxon>
        <taxon>Ephydroidea</taxon>
        <taxon>Drosophilidae</taxon>
        <taxon>Drosophila</taxon>
    </lineage>
</organism>
<accession>B4KLY7</accession>
<proteinExistence type="inferred from homology"/>
<dbReference type="EMBL" id="CH933808">
    <property type="protein sequence ID" value="EDW10776.1"/>
    <property type="molecule type" value="Genomic_DNA"/>
</dbReference>
<dbReference type="RefSeq" id="XP_002006841.1">
    <property type="nucleotide sequence ID" value="XM_002006805.2"/>
</dbReference>
<dbReference type="SMR" id="B4KLY7"/>
<dbReference type="FunCoup" id="B4KLY7">
    <property type="interactions" value="2417"/>
</dbReference>
<dbReference type="EnsemblMetazoa" id="FBtr0172011">
    <property type="protein sequence ID" value="FBpp0170503"/>
    <property type="gene ID" value="FBgn0144016"/>
</dbReference>
<dbReference type="EnsemblMetazoa" id="FBtr0422115">
    <property type="protein sequence ID" value="FBpp0380201"/>
    <property type="gene ID" value="FBgn0144016"/>
</dbReference>
<dbReference type="EnsemblMetazoa" id="XM_015164597.3">
    <property type="protein sequence ID" value="XP_015020083.1"/>
    <property type="gene ID" value="LOC6581083"/>
</dbReference>
<dbReference type="EnsemblMetazoa" id="XM_032730005.2">
    <property type="protein sequence ID" value="XP_032585896.1"/>
    <property type="gene ID" value="LOC6581083"/>
</dbReference>
<dbReference type="GeneID" id="6581083"/>
<dbReference type="CTD" id="35539"/>
<dbReference type="eggNOG" id="KOG2295">
    <property type="taxonomic scope" value="Eukaryota"/>
</dbReference>
<dbReference type="HOGENOM" id="CLU_008560_0_0_1"/>
<dbReference type="InParanoid" id="B4KLY7"/>
<dbReference type="OMA" id="GARDEWS"/>
<dbReference type="OrthoDB" id="342064at2759"/>
<dbReference type="PhylomeDB" id="B4KLY7"/>
<dbReference type="Proteomes" id="UP000009192">
    <property type="component" value="Unassembled WGS sequence"/>
</dbReference>
<dbReference type="GO" id="GO:0016604">
    <property type="term" value="C:nuclear body"/>
    <property type="evidence" value="ECO:0007669"/>
    <property type="project" value="TreeGrafter"/>
</dbReference>
<dbReference type="GO" id="GO:0005654">
    <property type="term" value="C:nucleoplasm"/>
    <property type="evidence" value="ECO:0000250"/>
    <property type="project" value="UniProtKB"/>
</dbReference>
<dbReference type="GO" id="GO:0003676">
    <property type="term" value="F:nucleic acid binding"/>
    <property type="evidence" value="ECO:0007669"/>
    <property type="project" value="InterPro"/>
</dbReference>
<dbReference type="GO" id="GO:0050829">
    <property type="term" value="P:defense response to Gram-negative bacterium"/>
    <property type="evidence" value="ECO:0007669"/>
    <property type="project" value="EnsemblMetazoa"/>
</dbReference>
<dbReference type="GO" id="GO:0045071">
    <property type="term" value="P:negative regulation of viral genome replication"/>
    <property type="evidence" value="ECO:0007669"/>
    <property type="project" value="EnsemblMetazoa"/>
</dbReference>
<dbReference type="GO" id="GO:0031053">
    <property type="term" value="P:primary miRNA processing"/>
    <property type="evidence" value="ECO:0000250"/>
    <property type="project" value="UniProtKB"/>
</dbReference>
<dbReference type="GO" id="GO:0035194">
    <property type="term" value="P:regulatory ncRNA-mediated post-transcriptional gene silencing"/>
    <property type="evidence" value="ECO:0000250"/>
    <property type="project" value="UniProtKB"/>
</dbReference>
<dbReference type="GO" id="GO:0030422">
    <property type="term" value="P:siRNA processing"/>
    <property type="evidence" value="ECO:0007669"/>
    <property type="project" value="EnsemblMetazoa"/>
</dbReference>
<dbReference type="CDD" id="cd00590">
    <property type="entry name" value="RRM_SF"/>
    <property type="match status" value="1"/>
</dbReference>
<dbReference type="InterPro" id="IPR035979">
    <property type="entry name" value="RBD_domain_sf"/>
</dbReference>
<dbReference type="InterPro" id="IPR039727">
    <property type="entry name" value="SE/Ars2"/>
</dbReference>
<dbReference type="InterPro" id="IPR007042">
    <property type="entry name" value="SERRATE/Ars2_C"/>
</dbReference>
<dbReference type="InterPro" id="IPR021933">
    <property type="entry name" value="SERRATE/Ars2_N"/>
</dbReference>
<dbReference type="PANTHER" id="PTHR13165">
    <property type="entry name" value="ARSENITE-RESISTANCE PROTEIN 2"/>
    <property type="match status" value="1"/>
</dbReference>
<dbReference type="PANTHER" id="PTHR13165:SF0">
    <property type="entry name" value="SERRATE RNA EFFECTOR MOLECULE HOMOLOG"/>
    <property type="match status" value="1"/>
</dbReference>
<dbReference type="Pfam" id="PF04959">
    <property type="entry name" value="ARS2"/>
    <property type="match status" value="1"/>
</dbReference>
<dbReference type="Pfam" id="PF12066">
    <property type="entry name" value="SERRATE_Ars2_N"/>
    <property type="match status" value="1"/>
</dbReference>
<dbReference type="SUPFAM" id="SSF54928">
    <property type="entry name" value="RNA-binding domain, RBD"/>
    <property type="match status" value="1"/>
</dbReference>
<name>SRRT_DROMO</name>
<sequence>MADSDDEYDRKRRDKFRGERDSYRPERRDERRPMGGAANSRDEWSERNPFRGSSAAGGGGGGGGARHRPDYSDYRGSGPRARYGSPGREMPPAKRMRPDWGDSEMRSNPRFGYDPYLVQAWNDHYQSLHSAYSHAGHGPSVRETGPAGGGGVSGDTQTQPAMLTLKQFLDTQDENISDSEVMRKYTEYKTDFKRQQLNEFFVAHKDEEWFKNKYHPEDSVRRSEEQRGFLKRRTEVFLELLENGTIGSVKVDSSQADALVRVLDTCVIKLEGGTDEDLKILDEKPKDPPIVYERKSETTESAVVAKREPESPKTEKDDDLPGASSPQHKSLRPVNLDEENWDEDEPMEVHPQTGKDGEKSDDRRSKEPEDEESVKSDNEKKLKKKKIKKRKRNSSDDDSSSSSSSDSDTESDDEKVKAKYDVEEGLRADQKAEALKDKEEAATAAKEKLLAPESPQPEDVVDPKEALEIKSEASEESKQDKTEQPVGQTERPTTDNPAEKNGEEEGAKAEDKPEAGTQESTANEVTETIDLDKVKDGPHPRALHRTSSIFLRNLAPSITKAEIEAICKRFSGYLRVAIADPLVERRWYRRGWITFTRDVNIKEICWSLNNQRLRDCEMGAIVNRDLSRRVRPANGITAHKQIVRADIKLCAKIAMNLDDRFKLWCDSNRSDAEDAEKKAGQEATNGSGASSSPSYGFNSKNPVLQNITDYLIEEASAEEEELLGLAGDNKDGDGEPIERDESLISVLDRLVLYLRIVHSVDYYNHCEYPYEDEMPNRCGIIHARGPAPMRVTSNDVQEYIKAYDGKLQQFLTKTVQLSDEEIKELGAKNPETEVEKFVQANTQELAKDKWLCPLSGKKFKGPEFIRKHIFNKHEEKVEEVRKEVQYFNNYLRDPKRPQLPEHPGSSKRTESESGRGSGYRPPMYPPFSAMPYGFAPPMMGGGGRGGRNFPPVRREMPLEHQRRIIGYHDLDAPINSDMFD</sequence>
<feature type="chain" id="PRO_0000385219" description="Serrate RNA effector molecule homolog">
    <location>
        <begin position="1"/>
        <end position="980"/>
    </location>
</feature>
<feature type="region of interest" description="Disordered" evidence="2">
    <location>
        <begin position="1"/>
        <end position="104"/>
    </location>
</feature>
<feature type="region of interest" description="Disordered" evidence="2">
    <location>
        <begin position="133"/>
        <end position="155"/>
    </location>
</feature>
<feature type="region of interest" description="Disordered" evidence="2">
    <location>
        <begin position="290"/>
        <end position="540"/>
    </location>
</feature>
<feature type="region of interest" description="Disordered" evidence="2">
    <location>
        <begin position="675"/>
        <end position="697"/>
    </location>
</feature>
<feature type="region of interest" description="Disordered" evidence="2">
    <location>
        <begin position="889"/>
        <end position="922"/>
    </location>
</feature>
<feature type="compositionally biased region" description="Basic and acidic residues" evidence="2">
    <location>
        <begin position="8"/>
        <end position="33"/>
    </location>
</feature>
<feature type="compositionally biased region" description="Basic and acidic residues" evidence="2">
    <location>
        <begin position="40"/>
        <end position="49"/>
    </location>
</feature>
<feature type="compositionally biased region" description="Gly residues" evidence="2">
    <location>
        <begin position="55"/>
        <end position="64"/>
    </location>
</feature>
<feature type="compositionally biased region" description="Basic and acidic residues" evidence="2">
    <location>
        <begin position="305"/>
        <end position="316"/>
    </location>
</feature>
<feature type="compositionally biased region" description="Acidic residues" evidence="2">
    <location>
        <begin position="336"/>
        <end position="346"/>
    </location>
</feature>
<feature type="compositionally biased region" description="Basic and acidic residues" evidence="2">
    <location>
        <begin position="353"/>
        <end position="380"/>
    </location>
</feature>
<feature type="compositionally biased region" description="Basic residues" evidence="2">
    <location>
        <begin position="381"/>
        <end position="392"/>
    </location>
</feature>
<feature type="compositionally biased region" description="Basic and acidic residues" evidence="2">
    <location>
        <begin position="414"/>
        <end position="450"/>
    </location>
</feature>
<feature type="compositionally biased region" description="Basic and acidic residues" evidence="2">
    <location>
        <begin position="461"/>
        <end position="483"/>
    </location>
</feature>
<feature type="compositionally biased region" description="Polar residues" evidence="2">
    <location>
        <begin position="485"/>
        <end position="495"/>
    </location>
</feature>
<feature type="compositionally biased region" description="Basic and acidic residues" evidence="2">
    <location>
        <begin position="497"/>
        <end position="514"/>
    </location>
</feature>
<feature type="compositionally biased region" description="Polar residues" evidence="2">
    <location>
        <begin position="517"/>
        <end position="526"/>
    </location>
</feature>
<feature type="compositionally biased region" description="Basic and acidic residues" evidence="2">
    <location>
        <begin position="530"/>
        <end position="539"/>
    </location>
</feature>
<feature type="compositionally biased region" description="Polar residues" evidence="2">
    <location>
        <begin position="682"/>
        <end position="697"/>
    </location>
</feature>
<feature type="modified residue" description="Phosphotyrosine" evidence="1">
    <location>
        <position position="83"/>
    </location>
</feature>
<feature type="modified residue" description="Phosphoserine" evidence="1">
    <location>
        <position position="85"/>
    </location>
</feature>
<feature type="modified residue" description="Phosphoserine" evidence="1">
    <location>
        <position position="311"/>
    </location>
</feature>
<feature type="modified residue" description="Phosphoserine" evidence="1">
    <location>
        <position position="454"/>
    </location>
</feature>
<protein>
    <recommendedName>
        <fullName>Serrate RNA effector molecule homolog</fullName>
    </recommendedName>
    <alternativeName>
        <fullName>Arsenite-resistance protein 2 homolog</fullName>
    </alternativeName>
</protein>
<evidence type="ECO:0000250" key="1"/>
<evidence type="ECO:0000256" key="2">
    <source>
        <dbReference type="SAM" id="MobiDB-lite"/>
    </source>
</evidence>
<evidence type="ECO:0000305" key="3"/>
<keyword id="KW-0539">Nucleus</keyword>
<keyword id="KW-0597">Phosphoprotein</keyword>
<keyword id="KW-1185">Reference proteome</keyword>
<keyword id="KW-0943">RNA-mediated gene silencing</keyword>